<gene>
    <name type="ordered locus">At5g47260</name>
    <name type="ORF">MQL5.12</name>
</gene>
<proteinExistence type="inferred from homology"/>
<evidence type="ECO:0000250" key="1"/>
<evidence type="ECO:0000255" key="2"/>
<evidence type="ECO:0000305" key="3"/>
<comment type="function">
    <text evidence="1">Potential disease resistance protein.</text>
</comment>
<comment type="domain">
    <text evidence="1">The LRR repeats probably act as specificity determinant of pathogen recognition.</text>
</comment>
<comment type="similarity">
    <text evidence="3">Belongs to the disease resistance NB-LRR family.</text>
</comment>
<comment type="sequence caution" evidence="3">
    <conflict type="erroneous gene model prediction">
        <sequence resource="EMBL-CDS" id="BAA97160"/>
    </conflict>
</comment>
<comment type="online information" name="NIB-LRRS">
    <link uri="http://niblrrs.ucdavis.edu"/>
    <text>Functional and comparative genomics of disease resistance gene homologs</text>
</comment>
<name>DRL38_ARATH</name>
<organism>
    <name type="scientific">Arabidopsis thaliana</name>
    <name type="common">Mouse-ear cress</name>
    <dbReference type="NCBI Taxonomy" id="3702"/>
    <lineage>
        <taxon>Eukaryota</taxon>
        <taxon>Viridiplantae</taxon>
        <taxon>Streptophyta</taxon>
        <taxon>Embryophyta</taxon>
        <taxon>Tracheophyta</taxon>
        <taxon>Spermatophyta</taxon>
        <taxon>Magnoliopsida</taxon>
        <taxon>eudicotyledons</taxon>
        <taxon>Gunneridae</taxon>
        <taxon>Pentapetalae</taxon>
        <taxon>rosids</taxon>
        <taxon>malvids</taxon>
        <taxon>Brassicales</taxon>
        <taxon>Brassicaceae</taxon>
        <taxon>Camelineae</taxon>
        <taxon>Arabidopsis</taxon>
    </lineage>
</organism>
<protein>
    <recommendedName>
        <fullName>Probable disease resistance protein At5g47260</fullName>
    </recommendedName>
</protein>
<accession>Q9LVT3</accession>
<sequence length="948" mass="107732">MGNNFSVESPSLAPFLCGKRKYLYNLERNLEALHKVMQDLNAMRNDLLKRLSKEEEIGLQGLQEVKEWISMVEEIEPKANRLLDESVSEIQRLSRYGYCSLIPASTYRYSEKVLTTMEGVETLRSKGVFEAVVHRALPPLVIKMPPIQLTVSQAKLLDTAWARLMDINVGTLGIYGRGGVGKTTLLTKLRNKLLVDAFGLVIFVVVGFEEVESIQDEIGKRLGLQWRRETKERKAAEILAVLKEKRFVLLLDGIQRELDLEEIGVPFPSRDNGCKIVFTTQSLEACDESKWVDAKVEITCLSPEEAWDLFQETVGENTLRSHQDIPKLARVVASTCRGLPLALNLIGEAMSGKRTVREWRYTIHVLASSTAEFPDMEDGTLPILKSIYDNMSDEIIRLCFLYCALFPENLDIGKEDLVNYWICEGILAKEDREEAEIQGYEIICDLVRMRLLMESGNGNCVKMHGMVREMALWIASEHFVVVGGERIHQMLNVNDWRMIRRMSVTSTQIQNISDSPQCSELTTLVFRRNRHLKWISGAFFQWMTGLVVLDLSFNRELAELPEEVSSLVLLRFLNLSWTCIKGLPLGLKELKSLIHLDLDYTSNLQEVDVIASLLNLQVLRLFHSVSMDLKLMEDIQLLKSLKELSLTVRGSSVLQRLLSIQRLASSIRRLHLTETTIVDGGILSLNAIFSLCELDILGCNILEITIDWRCTIQREIIPQFQNIRTMTIHRCEYLRDLTWLLLAPCLGELSVSECPQMEEVISKDKAMAKLGNTSEQPFQNLTKLVLDGLPKLESIYWTPLPFPVLEYLVIRRCPELRRLPFNSESTIGNQVETIIEEQVIKIVEWEDEATKQRFSHFNNRDFVQMAEDPKMDGLTSESHPIQTIDLVGTTGSGETATANNIQGKKVVQSGTHATVVTMECQTYKVFTPDCPINNMIDTPGTNFLLCYT</sequence>
<feature type="chain" id="PRO_0000212770" description="Probable disease resistance protein At5g47260">
    <location>
        <begin position="1"/>
        <end position="948"/>
    </location>
</feature>
<feature type="domain" description="NB-ARC">
    <location>
        <begin position="134"/>
        <end position="432"/>
    </location>
</feature>
<feature type="repeat" description="LRR 1">
    <location>
        <begin position="498"/>
        <end position="519"/>
    </location>
</feature>
<feature type="repeat" description="LRR 2">
    <location>
        <begin position="520"/>
        <end position="542"/>
    </location>
</feature>
<feature type="repeat" description="LRR 3">
    <location>
        <begin position="545"/>
        <end position="567"/>
    </location>
</feature>
<feature type="repeat" description="LRR 4">
    <location>
        <begin position="569"/>
        <end position="591"/>
    </location>
</feature>
<feature type="repeat" description="LRR 5">
    <location>
        <begin position="592"/>
        <end position="614"/>
    </location>
</feature>
<feature type="repeat" description="LRR 6">
    <location>
        <begin position="615"/>
        <end position="636"/>
    </location>
</feature>
<feature type="repeat" description="LRR 7">
    <location>
        <begin position="640"/>
        <end position="661"/>
    </location>
</feature>
<feature type="repeat" description="LRR 8">
    <location>
        <begin position="666"/>
        <end position="686"/>
    </location>
</feature>
<feature type="repeat" description="LRR 9">
    <location>
        <begin position="690"/>
        <end position="711"/>
    </location>
</feature>
<feature type="coiled-coil region" evidence="2">
    <location>
        <begin position="20"/>
        <end position="57"/>
    </location>
</feature>
<feature type="binding site" evidence="2">
    <location>
        <begin position="176"/>
        <end position="183"/>
    </location>
    <ligand>
        <name>ATP</name>
        <dbReference type="ChEBI" id="CHEBI:30616"/>
    </ligand>
</feature>
<dbReference type="EMBL" id="AB018117">
    <property type="protein sequence ID" value="BAA97160.1"/>
    <property type="status" value="ALT_SEQ"/>
    <property type="molecule type" value="Genomic_DNA"/>
</dbReference>
<dbReference type="EMBL" id="CP002688">
    <property type="protein sequence ID" value="AED95492.1"/>
    <property type="molecule type" value="Genomic_DNA"/>
</dbReference>
<dbReference type="RefSeq" id="NP_199537.2">
    <property type="nucleotide sequence ID" value="NM_124097.2"/>
</dbReference>
<dbReference type="SMR" id="Q9LVT3"/>
<dbReference type="STRING" id="3702.Q9LVT3"/>
<dbReference type="PaxDb" id="3702-AT5G47260.1"/>
<dbReference type="ProteomicsDB" id="224336"/>
<dbReference type="EnsemblPlants" id="AT5G47260.1">
    <property type="protein sequence ID" value="AT5G47260.1"/>
    <property type="gene ID" value="AT5G47260"/>
</dbReference>
<dbReference type="GeneID" id="834773"/>
<dbReference type="Gramene" id="AT5G47260.1">
    <property type="protein sequence ID" value="AT5G47260.1"/>
    <property type="gene ID" value="AT5G47260"/>
</dbReference>
<dbReference type="KEGG" id="ath:AT5G47260"/>
<dbReference type="Araport" id="AT5G47260"/>
<dbReference type="TAIR" id="AT5G47260"/>
<dbReference type="eggNOG" id="KOG4658">
    <property type="taxonomic scope" value="Eukaryota"/>
</dbReference>
<dbReference type="HOGENOM" id="CLU_000427_4_0_1"/>
<dbReference type="InParanoid" id="Q9LVT3"/>
<dbReference type="OMA" id="VEEWISM"/>
<dbReference type="PhylomeDB" id="Q9LVT3"/>
<dbReference type="PRO" id="PR:Q9LVT3"/>
<dbReference type="Proteomes" id="UP000006548">
    <property type="component" value="Chromosome 5"/>
</dbReference>
<dbReference type="ExpressionAtlas" id="Q9LVT3">
    <property type="expression patterns" value="baseline and differential"/>
</dbReference>
<dbReference type="GO" id="GO:0043531">
    <property type="term" value="F:ADP binding"/>
    <property type="evidence" value="ECO:0007669"/>
    <property type="project" value="InterPro"/>
</dbReference>
<dbReference type="GO" id="GO:0005524">
    <property type="term" value="F:ATP binding"/>
    <property type="evidence" value="ECO:0007669"/>
    <property type="project" value="UniProtKB-KW"/>
</dbReference>
<dbReference type="GO" id="GO:0016887">
    <property type="term" value="F:ATP hydrolysis activity"/>
    <property type="evidence" value="ECO:0007669"/>
    <property type="project" value="InterPro"/>
</dbReference>
<dbReference type="GO" id="GO:0005525">
    <property type="term" value="F:GTP binding"/>
    <property type="evidence" value="ECO:0007669"/>
    <property type="project" value="InterPro"/>
</dbReference>
<dbReference type="GO" id="GO:0098542">
    <property type="term" value="P:defense response to other organism"/>
    <property type="evidence" value="ECO:0007669"/>
    <property type="project" value="UniProtKB-ARBA"/>
</dbReference>
<dbReference type="FunFam" id="3.40.50.300:FF:001091">
    <property type="entry name" value="Probable disease resistance protein At1g61300"/>
    <property type="match status" value="1"/>
</dbReference>
<dbReference type="FunFam" id="1.10.10.10:FF:000322">
    <property type="entry name" value="Probable disease resistance protein At1g63360"/>
    <property type="match status" value="1"/>
</dbReference>
<dbReference type="FunFam" id="3.80.10.10:FF:002770">
    <property type="entry name" value="Probable disease resistance protein At5g47260"/>
    <property type="match status" value="1"/>
</dbReference>
<dbReference type="FunFam" id="1.10.8.430:FF:000003">
    <property type="entry name" value="Probable disease resistance protein At5g66910"/>
    <property type="match status" value="1"/>
</dbReference>
<dbReference type="Gene3D" id="1.10.8.430">
    <property type="entry name" value="Helical domain of apoptotic protease-activating factors"/>
    <property type="match status" value="1"/>
</dbReference>
<dbReference type="Gene3D" id="3.40.50.300">
    <property type="entry name" value="P-loop containing nucleotide triphosphate hydrolases"/>
    <property type="match status" value="2"/>
</dbReference>
<dbReference type="Gene3D" id="3.80.10.10">
    <property type="entry name" value="Ribonuclease Inhibitor"/>
    <property type="match status" value="1"/>
</dbReference>
<dbReference type="Gene3D" id="1.10.10.10">
    <property type="entry name" value="Winged helix-like DNA-binding domain superfamily/Winged helix DNA-binding domain"/>
    <property type="match status" value="1"/>
</dbReference>
<dbReference type="InterPro" id="IPR003593">
    <property type="entry name" value="AAA+_ATPase"/>
</dbReference>
<dbReference type="InterPro" id="IPR042197">
    <property type="entry name" value="Apaf_helical"/>
</dbReference>
<dbReference type="InterPro" id="IPR006703">
    <property type="entry name" value="G_AIG1"/>
</dbReference>
<dbReference type="InterPro" id="IPR032675">
    <property type="entry name" value="LRR_dom_sf"/>
</dbReference>
<dbReference type="InterPro" id="IPR055414">
    <property type="entry name" value="LRR_R13L4/SHOC2-like"/>
</dbReference>
<dbReference type="InterPro" id="IPR002182">
    <property type="entry name" value="NB-ARC"/>
</dbReference>
<dbReference type="InterPro" id="IPR027417">
    <property type="entry name" value="P-loop_NTPase"/>
</dbReference>
<dbReference type="InterPro" id="IPR050905">
    <property type="entry name" value="Plant_NBS-LRR"/>
</dbReference>
<dbReference type="InterPro" id="IPR036388">
    <property type="entry name" value="WH-like_DNA-bd_sf"/>
</dbReference>
<dbReference type="PANTHER" id="PTHR33463:SF220">
    <property type="entry name" value="NB-ARC DOMAIN-CONTAINING PROTEIN"/>
    <property type="match status" value="1"/>
</dbReference>
<dbReference type="PANTHER" id="PTHR33463">
    <property type="entry name" value="NB-ARC DOMAIN-CONTAINING PROTEIN-RELATED"/>
    <property type="match status" value="1"/>
</dbReference>
<dbReference type="Pfam" id="PF04548">
    <property type="entry name" value="AIG1"/>
    <property type="match status" value="1"/>
</dbReference>
<dbReference type="Pfam" id="PF23598">
    <property type="entry name" value="LRR_14"/>
    <property type="match status" value="1"/>
</dbReference>
<dbReference type="Pfam" id="PF00931">
    <property type="entry name" value="NB-ARC"/>
    <property type="match status" value="1"/>
</dbReference>
<dbReference type="Pfam" id="PF23559">
    <property type="entry name" value="WH_DRP"/>
    <property type="match status" value="1"/>
</dbReference>
<dbReference type="PRINTS" id="PR00364">
    <property type="entry name" value="DISEASERSIST"/>
</dbReference>
<dbReference type="SMART" id="SM00382">
    <property type="entry name" value="AAA"/>
    <property type="match status" value="1"/>
</dbReference>
<dbReference type="SUPFAM" id="SSF52058">
    <property type="entry name" value="L domain-like"/>
    <property type="match status" value="1"/>
</dbReference>
<dbReference type="SUPFAM" id="SSF52540">
    <property type="entry name" value="P-loop containing nucleoside triphosphate hydrolases"/>
    <property type="match status" value="2"/>
</dbReference>
<reference key="1">
    <citation type="journal article" date="2000" name="DNA Res.">
        <title>Structural analysis of Arabidopsis thaliana chromosome 5. X. Sequence features of the regions of 3,076,755 bp covered by sixty P1 and TAC clones.</title>
        <authorList>
            <person name="Sato S."/>
            <person name="Nakamura Y."/>
            <person name="Kaneko T."/>
            <person name="Katoh T."/>
            <person name="Asamizu E."/>
            <person name="Kotani H."/>
            <person name="Tabata S."/>
        </authorList>
    </citation>
    <scope>NUCLEOTIDE SEQUENCE [LARGE SCALE GENOMIC DNA]</scope>
    <source>
        <strain>cv. Columbia</strain>
    </source>
</reference>
<reference key="2">
    <citation type="journal article" date="2017" name="Plant J.">
        <title>Araport11: a complete reannotation of the Arabidopsis thaliana reference genome.</title>
        <authorList>
            <person name="Cheng C.Y."/>
            <person name="Krishnakumar V."/>
            <person name="Chan A.P."/>
            <person name="Thibaud-Nissen F."/>
            <person name="Schobel S."/>
            <person name="Town C.D."/>
        </authorList>
    </citation>
    <scope>GENOME REANNOTATION</scope>
    <source>
        <strain>cv. Columbia</strain>
    </source>
</reference>
<keyword id="KW-0067">ATP-binding</keyword>
<keyword id="KW-0175">Coiled coil</keyword>
<keyword id="KW-0433">Leucine-rich repeat</keyword>
<keyword id="KW-0547">Nucleotide-binding</keyword>
<keyword id="KW-0611">Plant defense</keyword>
<keyword id="KW-1185">Reference proteome</keyword>
<keyword id="KW-0677">Repeat</keyword>